<organism>
    <name type="scientific">Danio rerio</name>
    <name type="common">Zebrafish</name>
    <name type="synonym">Brachydanio rerio</name>
    <dbReference type="NCBI Taxonomy" id="7955"/>
    <lineage>
        <taxon>Eukaryota</taxon>
        <taxon>Metazoa</taxon>
        <taxon>Chordata</taxon>
        <taxon>Craniata</taxon>
        <taxon>Vertebrata</taxon>
        <taxon>Euteleostomi</taxon>
        <taxon>Actinopterygii</taxon>
        <taxon>Neopterygii</taxon>
        <taxon>Teleostei</taxon>
        <taxon>Ostariophysi</taxon>
        <taxon>Cypriniformes</taxon>
        <taxon>Danionidae</taxon>
        <taxon>Danioninae</taxon>
        <taxon>Danio</taxon>
    </lineage>
</organism>
<feature type="chain" id="PRO_0000305012" description="Mediator of RNA polymerase II transcription subunit 27">
    <location>
        <begin position="1"/>
        <end position="311"/>
    </location>
</feature>
<gene>
    <name type="primary">med27</name>
    <name type="synonym">crsp34</name>
    <name type="synonym">crsp8</name>
</gene>
<sequence>MADVMNVGVNLEAFSQAINAIQALRSSVTRVFDFLKDGMKNKETLESREKVFITEFQENLQSVNRDLNELERLSTLVGRPSESHPLHNSGLLSLDPVQDKTPLYSQLLQAYKWSNKLQYHAGLASSLLNQQSLKRSANQMGTSAKRRPKVQPSTLALPTQYVDDVISRIGRMFPDMSIELFRPNGTSAVLLVTLGKVLKAIVVMRSLFIDRTIVRGFHENIYTEDRKLDIWSKSNYQAFQKVTDHATTALLHYQLPQMPDVVVRSFMTWLRSYIKLFQTPCQRCGKYLQEGLPPTWRDFRTLEAFHDTCRQ</sequence>
<protein>
    <recommendedName>
        <fullName>Mediator of RNA polymerase II transcription subunit 27</fullName>
    </recommendedName>
    <alternativeName>
        <fullName>Cofactor required for Sp1 transcriptional activation subunit 8</fullName>
        <shortName>CRSP complex subunit 8</shortName>
    </alternativeName>
    <alternativeName>
        <fullName>Mediator complex subunit 27</fullName>
    </alternativeName>
</protein>
<proteinExistence type="evidence at transcript level"/>
<reference key="1">
    <citation type="submission" date="2003-09" db="EMBL/GenBank/DDBJ databases">
        <authorList>
            <consortium name="NIH - Zebrafish Gene Collection (ZGC) project"/>
        </authorList>
    </citation>
    <scope>NUCLEOTIDE SEQUENCE [LARGE SCALE MRNA]</scope>
</reference>
<reference key="2">
    <citation type="journal article" date="2006" name="Genetics">
        <title>Differential roles of transcriptional mediator complex subunits Crsp34/Med27, Crsp150/Med14 and Trap100/Med24 during zebrafish retinal development.</title>
        <authorList>
            <person name="Duerr K."/>
            <person name="Holzschuh J."/>
            <person name="Filippi A."/>
            <person name="Ettl A.-K."/>
            <person name="Ryu S."/>
            <person name="Shepherd I.T."/>
            <person name="Driever W."/>
        </authorList>
    </citation>
    <scope>FUNCTION</scope>
    <scope>DEVELOPMENTAL STAGE</scope>
</reference>
<name>MED27_DANRE</name>
<evidence type="ECO:0000250" key="1"/>
<evidence type="ECO:0000269" key="2">
    <source>
    </source>
</evidence>
<evidence type="ECO:0000305" key="3"/>
<comment type="function">
    <text evidence="1 2">Component of the Mediator complex, a coactivator involved in the regulated transcription of nearly all RNA polymerase II-dependent genes. Mediator functions as a bridge to convey information from gene-specific regulatory proteins to the basal RNA polymerase II transcription machinery. Mediator is recruited to promoters by direct interactions with regulatory proteins and serves as a scaffold for the assembly of a functional preinitiation complex with RNA polymerase II and the general transcription factors (By similarity). Required for the development of dopaminergic amacrine cells in the retina. May also negatively regulate the development of rod photoreceptor cells.</text>
</comment>
<comment type="subunit">
    <text evidence="1">Component of the Mediator complex.</text>
</comment>
<comment type="subcellular location">
    <subcellularLocation>
        <location evidence="1">Nucleus</location>
    </subcellularLocation>
</comment>
<comment type="developmental stage">
    <text evidence="2">Maternally expressed. Ubiquitously expressed throughout development.</text>
</comment>
<comment type="similarity">
    <text evidence="3">Belongs to the Mediator complex subunit 27 family.</text>
</comment>
<accession>Q6PFL0</accession>
<dbReference type="EMBL" id="BC057508">
    <property type="protein sequence ID" value="AAH57508.1"/>
    <property type="molecule type" value="mRNA"/>
</dbReference>
<dbReference type="RefSeq" id="NP_956954.1">
    <property type="nucleotide sequence ID" value="NM_200660.1"/>
</dbReference>
<dbReference type="SMR" id="Q6PFL0"/>
<dbReference type="FunCoup" id="Q6PFL0">
    <property type="interactions" value="1727"/>
</dbReference>
<dbReference type="STRING" id="7955.ENSDARP00000005238"/>
<dbReference type="PaxDb" id="7955-ENSDARP00000005238"/>
<dbReference type="Ensembl" id="ENSDART00000005140">
    <property type="protein sequence ID" value="ENSDARP00000005238"/>
    <property type="gene ID" value="ENSDARG00000009681"/>
</dbReference>
<dbReference type="GeneID" id="393633"/>
<dbReference type="KEGG" id="dre:393633"/>
<dbReference type="AGR" id="ZFIN:ZDB-GENE-040426-1601"/>
<dbReference type="CTD" id="9442"/>
<dbReference type="ZFIN" id="ZDB-GENE-040426-1601">
    <property type="gene designation" value="med27"/>
</dbReference>
<dbReference type="eggNOG" id="ENOG502QS6H">
    <property type="taxonomic scope" value="Eukaryota"/>
</dbReference>
<dbReference type="HOGENOM" id="CLU_056015_0_0_1"/>
<dbReference type="InParanoid" id="Q6PFL0"/>
<dbReference type="OMA" id="FHEDCRN"/>
<dbReference type="OrthoDB" id="1868004at2759"/>
<dbReference type="PhylomeDB" id="Q6PFL0"/>
<dbReference type="TreeFam" id="TF323728"/>
<dbReference type="PRO" id="PR:Q6PFL0"/>
<dbReference type="Proteomes" id="UP000000437">
    <property type="component" value="Chromosome 8"/>
</dbReference>
<dbReference type="Bgee" id="ENSDARG00000009681">
    <property type="expression patterns" value="Expressed in blastula and 21 other cell types or tissues"/>
</dbReference>
<dbReference type="ExpressionAtlas" id="Q6PFL0">
    <property type="expression patterns" value="baseline and differential"/>
</dbReference>
<dbReference type="GO" id="GO:0016592">
    <property type="term" value="C:mediator complex"/>
    <property type="evidence" value="ECO:0000318"/>
    <property type="project" value="GO_Central"/>
</dbReference>
<dbReference type="GO" id="GO:0003713">
    <property type="term" value="F:transcription coactivator activity"/>
    <property type="evidence" value="ECO:0000318"/>
    <property type="project" value="GO_Central"/>
</dbReference>
<dbReference type="GO" id="GO:0043010">
    <property type="term" value="P:camera-type eye development"/>
    <property type="evidence" value="ECO:0000315"/>
    <property type="project" value="ZFIN"/>
</dbReference>
<dbReference type="GO" id="GO:0006357">
    <property type="term" value="P:regulation of transcription by RNA polymerase II"/>
    <property type="evidence" value="ECO:0000318"/>
    <property type="project" value="GO_Central"/>
</dbReference>
<dbReference type="GO" id="GO:0046549">
    <property type="term" value="P:retinal cone cell development"/>
    <property type="evidence" value="ECO:0000315"/>
    <property type="project" value="ZFIN"/>
</dbReference>
<dbReference type="InterPro" id="IPR021627">
    <property type="entry name" value="Mediator_Med27"/>
</dbReference>
<dbReference type="PANTHER" id="PTHR13130">
    <property type="entry name" value="34 KDA TRANSCRIPTIONAL CO-ACTIVATOR-RELATED"/>
    <property type="match status" value="1"/>
</dbReference>
<dbReference type="PANTHER" id="PTHR13130:SF4">
    <property type="entry name" value="MEDIATOR OF RNA POLYMERASE II TRANSCRIPTION SUBUNIT 27"/>
    <property type="match status" value="1"/>
</dbReference>
<dbReference type="Pfam" id="PF11571">
    <property type="entry name" value="Med27"/>
    <property type="match status" value="1"/>
</dbReference>
<keyword id="KW-0010">Activator</keyword>
<keyword id="KW-0217">Developmental protein</keyword>
<keyword id="KW-0539">Nucleus</keyword>
<keyword id="KW-1185">Reference proteome</keyword>
<keyword id="KW-0804">Transcription</keyword>
<keyword id="KW-0805">Transcription regulation</keyword>